<keyword id="KW-0520">NAD</keyword>
<keyword id="KW-0547">Nucleotide-binding</keyword>
<keyword id="KW-0560">Oxidoreductase</keyword>
<keyword id="KW-1185">Reference proteome</keyword>
<comment type="function">
    <text evidence="2">Catalyzes the oxidation of beta-D-galacturonate and beta-D-glucuronate to galactarate and D-glucarate, respectively. Cannot use NADP(+) instead of NAD(+) as cosubstrate.</text>
</comment>
<comment type="catalytic activity">
    <reaction evidence="2">
        <text>beta-D-galacturonate + NAD(+) = D-galactaro-1,5-lactone + NADH + H(+)</text>
        <dbReference type="Rhea" id="RHEA:22404"/>
        <dbReference type="ChEBI" id="CHEBI:15378"/>
        <dbReference type="ChEBI" id="CHEBI:57540"/>
        <dbReference type="ChEBI" id="CHEBI:57945"/>
        <dbReference type="ChEBI" id="CHEBI:83383"/>
        <dbReference type="ChEBI" id="CHEBI:85312"/>
        <dbReference type="EC" id="1.1.1.203"/>
    </reaction>
</comment>
<comment type="catalytic activity">
    <reaction evidence="2">
        <text>beta-D-glucuronate + NAD(+) = D-glucaro-1,5-lactone + NADH + H(+)</text>
        <dbReference type="Rhea" id="RHEA:43500"/>
        <dbReference type="ChEBI" id="CHEBI:15378"/>
        <dbReference type="ChEBI" id="CHEBI:57540"/>
        <dbReference type="ChEBI" id="CHEBI:57945"/>
        <dbReference type="ChEBI" id="CHEBI:83384"/>
        <dbReference type="ChEBI" id="CHEBI:85313"/>
        <dbReference type="EC" id="1.1.1.203"/>
    </reaction>
</comment>
<comment type="biophysicochemical properties">
    <kinetics>
        <KM evidence="2">0.28 mM for D-glucuronate</KM>
        <KM evidence="2">0.04 mM for D-galacturonate</KM>
        <KM evidence="2">0.17 mM for NAD(+)</KM>
        <text>kcat is 74 sec(-1) and 24 sec(-1) with D-glucuronate and D-galacturonate as substrate, respectively.</text>
    </kinetics>
    <phDependence>
        <text evidence="2">Optimum pH is 8.</text>
    </phDependence>
    <temperatureDependence>
        <text evidence="2">Activity increases with increasing temperatures between 4 and 42 degrees Celsius. Activity is below 20% of the maximum after exposure at 37 degrees Celsius for 30 minutes.</text>
    </temperatureDependence>
</comment>
<comment type="pathway">
    <text>Carbohydrate acid metabolism; D-galacturonate degradation via prokaryotic oxidative pathway.</text>
</comment>
<comment type="subunit">
    <text evidence="1">Homohexamer.</text>
</comment>
<comment type="similarity">
    <text evidence="3">Belongs to the NAD(P)-dependent epimerase/dehydratase family.</text>
</comment>
<name>URODH_PSESM</name>
<gene>
    <name type="primary">udh</name>
    <name type="ordered locus">PSPTO_1053</name>
</gene>
<reference key="1">
    <citation type="journal article" date="2009" name="J. Bacteriol.">
        <title>Cloning and characterization of uronate dehydrogenases from two pseudomonads and Agrobacterium tumefaciens strain C58.</title>
        <authorList>
            <person name="Yoon S.H."/>
            <person name="Moon T.S."/>
            <person name="Iranpour P."/>
            <person name="Lanza A.M."/>
            <person name="Prather K.J."/>
        </authorList>
    </citation>
    <scope>NUCLEOTIDE SEQUENCE [GENOMIC DNA]</scope>
    <scope>IDENTIFICATION</scope>
    <scope>FUNCTION</scope>
    <scope>GENE NAME</scope>
    <scope>CATALYTIC ACTIVITY</scope>
    <scope>SUBSTRATE SPECIFICITY</scope>
    <scope>BIOPHYSICOCHEMICAL PROPERTIES</scope>
    <source>
        <strain>ATCC BAA-871 / DC3000</strain>
    </source>
</reference>
<reference key="2">
    <citation type="journal article" date="2003" name="Proc. Natl. Acad. Sci. U.S.A.">
        <title>The complete genome sequence of the Arabidopsis and tomato pathogen Pseudomonas syringae pv. tomato DC3000.</title>
        <authorList>
            <person name="Buell C.R."/>
            <person name="Joardar V."/>
            <person name="Lindeberg M."/>
            <person name="Selengut J."/>
            <person name="Paulsen I.T."/>
            <person name="Gwinn M.L."/>
            <person name="Dodson R.J."/>
            <person name="DeBoy R.T."/>
            <person name="Durkin A.S."/>
            <person name="Kolonay J.F."/>
            <person name="Madupu R."/>
            <person name="Daugherty S.C."/>
            <person name="Brinkac L.M."/>
            <person name="Beanan M.J."/>
            <person name="Haft D.H."/>
            <person name="Nelson W.C."/>
            <person name="Davidsen T.M."/>
            <person name="Zafar N."/>
            <person name="Zhou L."/>
            <person name="Liu J."/>
            <person name="Yuan Q."/>
            <person name="Khouri H.M."/>
            <person name="Fedorova N.B."/>
            <person name="Tran B."/>
            <person name="Russell D."/>
            <person name="Berry K.J."/>
            <person name="Utterback T.R."/>
            <person name="Van Aken S.E."/>
            <person name="Feldblyum T.V."/>
            <person name="D'Ascenzo M."/>
            <person name="Deng W.-L."/>
            <person name="Ramos A.R."/>
            <person name="Alfano J.R."/>
            <person name="Cartinhour S."/>
            <person name="Chatterjee A.K."/>
            <person name="Delaney T.P."/>
            <person name="Lazarowitz S.G."/>
            <person name="Martin G.B."/>
            <person name="Schneider D.J."/>
            <person name="Tang X."/>
            <person name="Bender C.L."/>
            <person name="White O."/>
            <person name="Fraser C.M."/>
            <person name="Collmer A."/>
        </authorList>
    </citation>
    <scope>NUCLEOTIDE SEQUENCE [LARGE SCALE GENOMIC DNA]</scope>
    <source>
        <strain>ATCC BAA-871 / DC3000</strain>
    </source>
</reference>
<dbReference type="EC" id="1.1.1.203" evidence="2"/>
<dbReference type="EMBL" id="EU377538">
    <property type="protein sequence ID" value="ABY64888.1"/>
    <property type="molecule type" value="Genomic_DNA"/>
</dbReference>
<dbReference type="EMBL" id="AE016853">
    <property type="protein sequence ID" value="AAO54584.1"/>
    <property type="molecule type" value="Genomic_DNA"/>
</dbReference>
<dbReference type="RefSeq" id="NP_790889.1">
    <property type="nucleotide sequence ID" value="NC_004578.1"/>
</dbReference>
<dbReference type="RefSeq" id="WP_011103399.1">
    <property type="nucleotide sequence ID" value="NC_004578.1"/>
</dbReference>
<dbReference type="SMR" id="Q888H1"/>
<dbReference type="STRING" id="223283.PSPTO_1053"/>
<dbReference type="GeneID" id="1182687"/>
<dbReference type="KEGG" id="pst:PSPTO_1053"/>
<dbReference type="PATRIC" id="fig|223283.9.peg.1065"/>
<dbReference type="eggNOG" id="COG0451">
    <property type="taxonomic scope" value="Bacteria"/>
</dbReference>
<dbReference type="HOGENOM" id="CLU_079334_0_0_6"/>
<dbReference type="OrthoDB" id="8770295at2"/>
<dbReference type="PhylomeDB" id="Q888H1"/>
<dbReference type="BioCyc" id="MetaCyc:MONOMER-15612"/>
<dbReference type="BRENDA" id="1.1.1.203">
    <property type="organism ID" value="10904"/>
</dbReference>
<dbReference type="UniPathway" id="UPA01050"/>
<dbReference type="Proteomes" id="UP000002515">
    <property type="component" value="Chromosome"/>
</dbReference>
<dbReference type="GO" id="GO:0000166">
    <property type="term" value="F:nucleotide binding"/>
    <property type="evidence" value="ECO:0007669"/>
    <property type="project" value="UniProtKB-KW"/>
</dbReference>
<dbReference type="GO" id="GO:0050388">
    <property type="term" value="F:uronate dehydrogenase activity"/>
    <property type="evidence" value="ECO:0007669"/>
    <property type="project" value="UniProtKB-EC"/>
</dbReference>
<dbReference type="Gene3D" id="3.40.50.720">
    <property type="entry name" value="NAD(P)-binding Rossmann-like Domain"/>
    <property type="match status" value="1"/>
</dbReference>
<dbReference type="InterPro" id="IPR001509">
    <property type="entry name" value="Epimerase_deHydtase"/>
</dbReference>
<dbReference type="InterPro" id="IPR036291">
    <property type="entry name" value="NAD(P)-bd_dom_sf"/>
</dbReference>
<dbReference type="PANTHER" id="PTHR43103:SF5">
    <property type="entry name" value="4-EPIMERASE, PUTATIVE (AFU_ORTHOLOGUE AFUA_7G00360)-RELATED"/>
    <property type="match status" value="1"/>
</dbReference>
<dbReference type="PANTHER" id="PTHR43103">
    <property type="entry name" value="NUCLEOSIDE-DIPHOSPHATE-SUGAR EPIMERASE"/>
    <property type="match status" value="1"/>
</dbReference>
<dbReference type="Pfam" id="PF01370">
    <property type="entry name" value="Epimerase"/>
    <property type="match status" value="1"/>
</dbReference>
<dbReference type="SUPFAM" id="SSF51735">
    <property type="entry name" value="NAD(P)-binding Rossmann-fold domains"/>
    <property type="match status" value="1"/>
</dbReference>
<organism>
    <name type="scientific">Pseudomonas syringae pv. tomato (strain ATCC BAA-871 / DC3000)</name>
    <dbReference type="NCBI Taxonomy" id="223283"/>
    <lineage>
        <taxon>Bacteria</taxon>
        <taxon>Pseudomonadati</taxon>
        <taxon>Pseudomonadota</taxon>
        <taxon>Gammaproteobacteria</taxon>
        <taxon>Pseudomonadales</taxon>
        <taxon>Pseudomonadaceae</taxon>
        <taxon>Pseudomonas</taxon>
    </lineage>
</organism>
<evidence type="ECO:0000250" key="1"/>
<evidence type="ECO:0000269" key="2">
    <source>
    </source>
</evidence>
<evidence type="ECO:0000305" key="3"/>
<proteinExistence type="evidence at protein level"/>
<protein>
    <recommendedName>
        <fullName>Uronate dehydrogenase</fullName>
        <ecNumber evidence="2">1.1.1.203</ecNumber>
    </recommendedName>
    <alternativeName>
        <fullName>D-galacturonate dehydrogenase</fullName>
    </alternativeName>
    <alternativeName>
        <fullName>D-glucuronate dehydrogenase</fullName>
    </alternativeName>
    <alternativeName>
        <fullName>Hexuronate dehydrogenase</fullName>
    </alternativeName>
</protein>
<feature type="chain" id="PRO_0000429435" description="Uronate dehydrogenase">
    <location>
        <begin position="1"/>
        <end position="275"/>
    </location>
</feature>
<feature type="active site" description="Proton acceptor" evidence="1">
    <location>
        <position position="145"/>
    </location>
</feature>
<feature type="binding site" evidence="1">
    <location>
        <begin position="22"/>
        <end position="23"/>
    </location>
    <ligand>
        <name>NAD(+)</name>
        <dbReference type="ChEBI" id="CHEBI:57540"/>
    </ligand>
</feature>
<feature type="binding site" evidence="1">
    <location>
        <begin position="42"/>
        <end position="44"/>
    </location>
    <ligand>
        <name>NAD(+)</name>
        <dbReference type="ChEBI" id="CHEBI:57540"/>
    </ligand>
</feature>
<feature type="binding site" evidence="1">
    <location>
        <begin position="60"/>
        <end position="61"/>
    </location>
    <ligand>
        <name>NAD(+)</name>
        <dbReference type="ChEBI" id="CHEBI:57540"/>
    </ligand>
</feature>
<feature type="binding site" evidence="1">
    <location>
        <begin position="80"/>
        <end position="84"/>
    </location>
    <ligand>
        <name>NAD(+)</name>
        <dbReference type="ChEBI" id="CHEBI:57540"/>
    </ligand>
</feature>
<feature type="binding site" evidence="1">
    <location>
        <position position="84"/>
    </location>
    <ligand>
        <name>substrate</name>
    </ligand>
</feature>
<feature type="binding site" evidence="1">
    <location>
        <begin position="120"/>
        <end position="122"/>
    </location>
    <ligand>
        <name>substrate</name>
    </ligand>
</feature>
<feature type="binding site" evidence="1">
    <location>
        <position position="149"/>
    </location>
    <ligand>
        <name>NAD(+)</name>
        <dbReference type="ChEBI" id="CHEBI:57540"/>
    </ligand>
</feature>
<feature type="binding site" evidence="1">
    <location>
        <position position="174"/>
    </location>
    <ligand>
        <name>substrate</name>
    </ligand>
</feature>
<feature type="binding site" evidence="1">
    <location>
        <position position="175"/>
    </location>
    <ligand>
        <name>NAD(+)</name>
        <dbReference type="ChEBI" id="CHEBI:57540"/>
    </ligand>
</feature>
<feature type="binding site" evidence="1">
    <location>
        <position position="183"/>
    </location>
    <ligand>
        <name>substrate</name>
    </ligand>
</feature>
<sequence>MASAHTTQTPFNRLLLTGAAGGLGKVLRETLRPYSHILRLSDIAEMAPAVGDHEEVQVCDLADKDAVHRLVEGVDAILHFGGVSVERPFEEILGANICGVFHIYEAARRHGVKRVIFASSNHVIGFYKQNETIDAHSPRRPDSYYGLSKSYGEDMASFYFDRYGIETVSIRIGSSFPEPQNRRMMSTWLSFDDLTRLLERALYTPDVGHTVVYGVSDNKTVWWDNRFASKLDYAPKDSSEVFRAKVDAQPMPADDDPAMVYQGGAFVASGPFGDK</sequence>
<accession>Q888H1</accession>
<accession>B0G0W7</accession>
<accession>F5HD46</accession>